<sequence>MNSNRTSSSHNSRNLKILNASFDVPRPPGGGNSPLPSQGRSVRELEEQMSALRKENFNLKLRIYFLEEGQPGARADSSTESLSKQLIDAKIEIATLRKTVDVKMELLKDAARAISHHEELQRKADIDSQAIIDELQEQIHAYQMAESGGQPVENIAKTRKMLRLESEVQRLEEELVNIEARNVAARNELEFMLAERLESLTACEGKIQELAIKNSELVERLEKETASAESSNEAIDSLKVELEACRKENQDLVTSIRTLKHDMKRQVRSMKEAANTMDVQRQSILLLEATIKRKEKSCGSMQKNVLNYEALIAKLNAELETMRQQNVYFRELSENLQQKEVRQLDRGVAIVQPMRMTADAGRFVWQSGTIVAQEPLPLERQSAAATSNVSVSAVRLSSGPPPDQTYPVNGHDRAKYGLLQLFAAKLDWISAVPLALGHLALKIILLAMRLHSCLQNVHIPLRANRDLGAQLADKICELQEAQEKLKERERIHEQACRTIQKLMQKLSSQEKEIKKLNQENEQSANKENDCAKTVISPSSSGRSMSDNEASSQEMSTNLRVRYELKINEQEEKIKQLQTEVKKKTANLQNLVNKELWEKNREVERLTKLLANQQKTLPQISEESAGEADLQQSFTEAEYMRALERNKLLQRKVDVLFQRLADDQQNSAVIGQLRLELQQARTEVETADKWRLECVDVCSVLTNRLEELAGFLNSLLKHKDVLGVLAADRRNAMRKAVDRSLDLSKSLNMTLNITATSLADQSLAQLCNLSEILYTEGDASHKTFNSHEELHAATSMAPTVENLKAENKALKKELEKRRSSEGQRKERRSLPLPSQQFDNQSESEAWSEPDRKVSLARIGLDETSNSLAAPEQAISESESEGRTCATRQDRNRNSERIAQLEEQIAQKDERMLNVQCQMVELDNRYKQEQLRCLDITQQLEQLRAINEALTADLHAIGSHEEERMVELQRQLELKNQQIDQLKLAHSTLTADSQITEMELQALQQQMQEIEQLHADSVETLQSQLQKLKLDAVQQLEEHERLHREALERDWVALTTYQEQAQQLLELQRSLDYHQENEKELKQTLVENELATRALKKQLDESTLQASKAVMERTKAYNDKLQLEKRSEELRLQLEALKEEHQKLLQKRSNSSDVSQSGYTSEEVAVPMGPPSGQATTCKQAAAAVLGQRVNTSSPDLGIESDAGRISSVEVSNAQRAMLKTVEMKTEGSASPKAKSEESTSPDSKSNVATGAATVHDCAKVDLENAELRRKLIRTKRAFEDTYEKLRMANKAKAQVEKDIKNQILKTHNVLRNVRSNMENEL</sequence>
<proteinExistence type="evidence at protein level"/>
<name>CNN_DROME</name>
<comment type="function">
    <text evidence="6 7">Core component of the centrosome throughout spermatogenesis. May participate in mitotic spindle assembly and the mechanics of morphogenesis through an interaction with microtubules, either directly or indirectly. Is a target of several homeotic genes.</text>
</comment>
<comment type="subunit">
    <text>Monomer.</text>
</comment>
<comment type="subcellular location">
    <subcellularLocation>
        <location evidence="5 7">Cytoplasm</location>
    </subcellularLocation>
    <subcellularLocation>
        <location evidence="5">Cytoplasm</location>
        <location evidence="5">Cytoskeleton</location>
        <location evidence="5">Microtubule organizing center</location>
        <location evidence="5">Centrosome</location>
    </subcellularLocation>
    <subcellularLocation>
        <location evidence="7">Cytoplasm</location>
        <location evidence="7">Cytoskeleton</location>
        <location evidence="7">Flagellum basal body</location>
    </subcellularLocation>
    <subcellularLocation>
        <location evidence="4">Cytoplasm</location>
        <location evidence="4">Cytoskeleton</location>
        <location evidence="4">Microtubule organizing center</location>
    </subcellularLocation>
    <subcellularLocation>
        <location evidence="4">Cytoplasm</location>
        <location evidence="4">Perinuclear region</location>
    </subcellularLocation>
    <text evidence="4 7">Localized to the centrosomes through complete nuclear cycles in mitotic and meiotic cells (PubMed:9548723). Redistributed into the cytoplasm in G2 phase cells. In post-meiotic stages, found associated with the basal body of the maturing spermatid (PubMed:9548723). In the fat body, localizes to a perinuclear non-centrosomal microtubule-organizing centers (ncMTOCs) (PubMed:32066907).</text>
</comment>
<comment type="alternative products">
    <event type="alternative splicing"/>
    <isoform>
        <id>P54623-1</id>
        <name>J</name>
        <name>Embryonic</name>
        <sequence type="displayed"/>
    </isoform>
    <isoform>
        <id>P54623-2</id>
        <name>A</name>
        <name>Testis</name>
        <sequence type="described" ref="VSP_013811 VSP_013813"/>
    </isoform>
    <isoform>
        <id>P54623-3</id>
        <name>B</name>
        <sequence type="described" ref="VSP_013812 VSP_013813"/>
    </isoform>
    <isoform>
        <id>P54623-4</id>
        <name>G</name>
        <sequence type="described" ref="VSP_059602 VSP_059603"/>
    </isoform>
    <isoform>
        <id>P54623-5</id>
        <name>H</name>
        <sequence type="described" ref="VSP_059600 VSP_059601"/>
    </isoform>
</comment>
<comment type="tissue specificity">
    <text evidence="5 7">Developing visceral mesoderm of the midgut, the central and peripheral nervous system, and developing gonads. Isoform J: Expressed in ovaries, testis and embryos. Isoform A: Expressed in testis only.</text>
</comment>
<comment type="developmental stage">
    <text evidence="6">Expressed both maternally and zygotically.</text>
</comment>
<comment type="disruption phenotype">
    <text evidence="4">RNAi-mediated knockdown has no effect on nuclear positioning in fat body cells.</text>
</comment>
<feature type="chain" id="PRO_0000089974" description="Centrosomin">
    <location>
        <begin position="1"/>
        <end position="1320"/>
    </location>
</feature>
<feature type="region of interest" description="Disordered" evidence="2">
    <location>
        <begin position="20"/>
        <end position="41"/>
    </location>
</feature>
<feature type="region of interest" description="Disordered" evidence="2">
    <location>
        <begin position="517"/>
        <end position="554"/>
    </location>
</feature>
<feature type="region of interest" description="Disordered" evidence="2">
    <location>
        <begin position="810"/>
        <end position="849"/>
    </location>
</feature>
<feature type="region of interest" description="Disordered" evidence="2">
    <location>
        <begin position="863"/>
        <end position="893"/>
    </location>
</feature>
<feature type="region of interest" description="Disordered" evidence="2">
    <location>
        <begin position="1220"/>
        <end position="1249"/>
    </location>
</feature>
<feature type="coiled-coil region" evidence="1">
    <location>
        <begin position="97"/>
        <end position="516"/>
    </location>
</feature>
<feature type="coiled-coil region" evidence="1">
    <location>
        <begin position="626"/>
        <end position="654"/>
    </location>
</feature>
<feature type="coiled-coil region" evidence="1">
    <location>
        <begin position="712"/>
        <end position="983"/>
    </location>
</feature>
<feature type="short sequence motif" description="Nuclear localization signal" evidence="1">
    <location>
        <begin position="644"/>
        <end position="656"/>
    </location>
</feature>
<feature type="compositionally biased region" description="Basic and acidic residues" evidence="2">
    <location>
        <begin position="517"/>
        <end position="530"/>
    </location>
</feature>
<feature type="compositionally biased region" description="Polar residues" evidence="2">
    <location>
        <begin position="535"/>
        <end position="554"/>
    </location>
</feature>
<feature type="compositionally biased region" description="Basic and acidic residues" evidence="2">
    <location>
        <begin position="810"/>
        <end position="823"/>
    </location>
</feature>
<feature type="compositionally biased region" description="Polar residues" evidence="2">
    <location>
        <begin position="831"/>
        <end position="843"/>
    </location>
</feature>
<feature type="compositionally biased region" description="Polar residues" evidence="2">
    <location>
        <begin position="1237"/>
        <end position="1247"/>
    </location>
</feature>
<feature type="modified residue" description="Phosphoserine" evidence="3">
    <location>
        <position position="545"/>
    </location>
</feature>
<feature type="modified residue" description="Phosphothreonine" evidence="3">
    <location>
        <position position="782"/>
    </location>
</feature>
<feature type="modified residue" description="Phosphoserine" evidence="3">
    <location>
        <position position="785"/>
    </location>
</feature>
<feature type="modified residue" description="Phosphoserine" evidence="3">
    <location>
        <position position="874"/>
    </location>
</feature>
<feature type="modified residue" description="Phosphoserine" evidence="3">
    <location>
        <position position="876"/>
    </location>
</feature>
<feature type="modified residue" description="Phosphoserine" evidence="3">
    <location>
        <position position="878"/>
    </location>
</feature>
<feature type="modified residue" description="Phosphoserine" evidence="3">
    <location>
        <position position="1191"/>
    </location>
</feature>
<feature type="modified residue" description="Phosphoserine" evidence="3">
    <location>
        <position position="1234"/>
    </location>
</feature>
<feature type="modified residue" description="Phosphoserine" evidence="3">
    <location>
        <position position="1237"/>
    </location>
</feature>
<feature type="modified residue" description="Phosphoserine" evidence="3">
    <location>
        <position position="1239"/>
    </location>
</feature>
<feature type="splice variant" id="VSP_013811" description="In isoform A." evidence="8 9 10">
    <original>MNSNRTSSSHNSRNLKILN</original>
    <variation>MDQSKQVLRDYCGDGNGTCASSLKEITLIETVTSFLEENGAAEIDRRVLRKLAEALSKSIDDTSPGALQDVTMENSY</variation>
    <location>
        <begin position="1"/>
        <end position="19"/>
    </location>
</feature>
<feature type="splice variant" id="VSP_013812" description="In isoform B." evidence="10">
    <original>MNSNRTSSSHNSRNLKILN</original>
    <variation>MAGIFRSTSLNHSSDVPGTPFKRYSLNSNNSTFCTSPGALQDVTMENSY</variation>
    <location>
        <begin position="1"/>
        <end position="19"/>
    </location>
</feature>
<feature type="splice variant" id="VSP_013813" description="In isoform A and isoform B." evidence="8 9 10">
    <location>
        <begin position="233"/>
        <end position="462"/>
    </location>
</feature>
<feature type="splice variant" id="VSP_059600" description="In isoform H.">
    <original>RFVWQSGTIVAQEPLPLERQSAAATSNVSVSAVRLSSGPPPDQTYPVNGHDRAKYGLLQLFAAKLDWISAVPLALGHLALKIILLAMRLHSCLQNVHIPLR</original>
    <variation>VGITSSLERSGSTSSLHSNFSSISVLCGSQGPSSHKSLCHWKGSQLQQQATYPCPQYVYHQGHHQTRHTQLMAMTAPSTAFYNYSLPSLTGFRQFLWRWGT</variation>
    <location>
        <begin position="362"/>
        <end position="462"/>
    </location>
</feature>
<feature type="splice variant" id="VSP_059601" description="In isoform H.">
    <location>
        <begin position="463"/>
        <end position="1320"/>
    </location>
</feature>
<feature type="splice variant" id="VSP_059602" description="In isoform G.">
    <original>ANRDLGAQLADKICELQE</original>
    <variation>VSFELGHSMPLAGILYSI</variation>
    <location>
        <begin position="463"/>
        <end position="480"/>
    </location>
</feature>
<feature type="splice variant" id="VSP_059603" description="In isoform G.">
    <location>
        <begin position="481"/>
        <end position="1320"/>
    </location>
</feature>
<feature type="sequence conflict" description="In Ref. 6; AAX33417." evidence="11" ref="6">
    <original>N</original>
    <variation>S</variation>
    <location>
        <position position="177"/>
    </location>
</feature>
<feature type="sequence conflict" description="In Ref. 6; AAX33417." evidence="11" ref="6">
    <original>R</original>
    <variation>S</variation>
    <location>
        <position position="490"/>
    </location>
</feature>
<feature type="sequence conflict" description="In Ref. 6; AAX33417." evidence="11" ref="6">
    <original>K</original>
    <variation>E</variation>
    <location>
        <position position="607"/>
    </location>
</feature>
<feature type="sequence conflict" description="In Ref. 6; AAX33417." evidence="11" ref="6">
    <original>D</original>
    <variation>G</variation>
    <location>
        <position position="951"/>
    </location>
</feature>
<feature type="sequence conflict" description="In Ref. 1; AAB82065." evidence="11" ref="1">
    <original>H</original>
    <variation>Q</variation>
    <location>
        <position position="953"/>
    </location>
</feature>
<feature type="sequence conflict" description="In Ref. 1; AAB82065." evidence="11" ref="1">
    <original>L</original>
    <variation>Q</variation>
    <location>
        <position position="1011"/>
    </location>
</feature>
<feature type="helix" evidence="12">
    <location>
        <begin position="670"/>
        <end position="679"/>
    </location>
</feature>
<feature type="helix" evidence="12">
    <location>
        <begin position="681"/>
        <end position="687"/>
    </location>
</feature>
<feature type="helix" evidence="12">
    <location>
        <begin position="690"/>
        <end position="713"/>
    </location>
</feature>
<feature type="helix" evidence="12">
    <location>
        <begin position="1256"/>
        <end position="1311"/>
    </location>
</feature>
<accession>P54623</accession>
<accession>A0A0B4K705</accession>
<accession>E1JH56</accession>
<accession>Q5BIF5</accession>
<accession>Q86NP3</accession>
<accession>Q8IHE5</accession>
<accession>Q8ML65</accession>
<accession>Q9V6P7</accession>
<accession>Q9V6P8</accession>
<protein>
    <recommendedName>
        <fullName>Centrosomin</fullName>
    </recommendedName>
    <alternativeName>
        <fullName>Protein arrow</fullName>
    </alternativeName>
</protein>
<organism>
    <name type="scientific">Drosophila melanogaster</name>
    <name type="common">Fruit fly</name>
    <dbReference type="NCBI Taxonomy" id="7227"/>
    <lineage>
        <taxon>Eukaryota</taxon>
        <taxon>Metazoa</taxon>
        <taxon>Ecdysozoa</taxon>
        <taxon>Arthropoda</taxon>
        <taxon>Hexapoda</taxon>
        <taxon>Insecta</taxon>
        <taxon>Pterygota</taxon>
        <taxon>Neoptera</taxon>
        <taxon>Endopterygota</taxon>
        <taxon>Diptera</taxon>
        <taxon>Brachycera</taxon>
        <taxon>Muscomorpha</taxon>
        <taxon>Ephydroidea</taxon>
        <taxon>Drosophilidae</taxon>
        <taxon>Drosophila</taxon>
        <taxon>Sophophora</taxon>
    </lineage>
</organism>
<evidence type="ECO:0000255" key="1"/>
<evidence type="ECO:0000256" key="2">
    <source>
        <dbReference type="SAM" id="MobiDB-lite"/>
    </source>
</evidence>
<evidence type="ECO:0000269" key="3">
    <source>
    </source>
</evidence>
<evidence type="ECO:0000269" key="4">
    <source>
    </source>
</evidence>
<evidence type="ECO:0000269" key="5">
    <source>
    </source>
</evidence>
<evidence type="ECO:0000269" key="6">
    <source>
    </source>
</evidence>
<evidence type="ECO:0000269" key="7">
    <source>
    </source>
</evidence>
<evidence type="ECO:0000303" key="8">
    <source>
    </source>
</evidence>
<evidence type="ECO:0000303" key="9">
    <source>
    </source>
</evidence>
<evidence type="ECO:0000303" key="10">
    <source ref="6"/>
</evidence>
<evidence type="ECO:0000305" key="11"/>
<evidence type="ECO:0007829" key="12">
    <source>
        <dbReference type="PDB" id="5MVW"/>
    </source>
</evidence>
<reference key="1">
    <citation type="journal article" date="1995" name="Development">
        <title>The Drosophila homeotic target gene centrosomin (cnn) encodes a novel centrosomal protein with leucine zippers and maps to a genomic region required for midgut morphogenesis.</title>
        <authorList>
            <person name="Heuer J.G."/>
            <person name="Li K."/>
            <person name="Kaufman T.C."/>
        </authorList>
    </citation>
    <scope>NUCLEOTIDE SEQUENCE [MRNA] (ISOFORM A)</scope>
    <scope>SUBCELLULAR LOCATION</scope>
    <scope>TISSUE SPECIFICITY</scope>
    <source>
        <strain>Oregon-R</strain>
    </source>
</reference>
<reference key="2">
    <citation type="submission" date="1997-10" db="EMBL/GenBank/DDBJ databases">
        <authorList>
            <person name="Li K."/>
            <person name="Kaufman T.C."/>
        </authorList>
    </citation>
    <scope>SEQUENCE REVISION</scope>
</reference>
<reference key="3">
    <citation type="journal article" date="1998" name="J. Cell Biol.">
        <title>Drosophila centrosomin protein is required for male meiosis and assembly of the flagellar axoneme.</title>
        <authorList>
            <person name="Li K."/>
            <person name="Xu E.Y."/>
            <person name="Cecil J.K."/>
            <person name="Turner F.R."/>
            <person name="Megraw T.L."/>
            <person name="Kaufman T.C."/>
        </authorList>
    </citation>
    <scope>NUCLEOTIDE SEQUENCE [MRNA] (ISOFORMS A AND J)</scope>
    <scope>FUNCTION</scope>
    <scope>SUBCELLULAR LOCATION</scope>
    <scope>TISSUE SPECIFICITY</scope>
    <source>
        <tissue>Embryo</tissue>
        <tissue>Testis</tissue>
    </source>
</reference>
<reference key="4">
    <citation type="journal article" date="2000" name="Science">
        <title>The genome sequence of Drosophila melanogaster.</title>
        <authorList>
            <person name="Adams M.D."/>
            <person name="Celniker S.E."/>
            <person name="Holt R.A."/>
            <person name="Evans C.A."/>
            <person name="Gocayne J.D."/>
            <person name="Amanatides P.G."/>
            <person name="Scherer S.E."/>
            <person name="Li P.W."/>
            <person name="Hoskins R.A."/>
            <person name="Galle R.F."/>
            <person name="George R.A."/>
            <person name="Lewis S.E."/>
            <person name="Richards S."/>
            <person name="Ashburner M."/>
            <person name="Henderson S.N."/>
            <person name="Sutton G.G."/>
            <person name="Wortman J.R."/>
            <person name="Yandell M.D."/>
            <person name="Zhang Q."/>
            <person name="Chen L.X."/>
            <person name="Brandon R.C."/>
            <person name="Rogers Y.-H.C."/>
            <person name="Blazej R.G."/>
            <person name="Champe M."/>
            <person name="Pfeiffer B.D."/>
            <person name="Wan K.H."/>
            <person name="Doyle C."/>
            <person name="Baxter E.G."/>
            <person name="Helt G."/>
            <person name="Nelson C.R."/>
            <person name="Miklos G.L.G."/>
            <person name="Abril J.F."/>
            <person name="Agbayani A."/>
            <person name="An H.-J."/>
            <person name="Andrews-Pfannkoch C."/>
            <person name="Baldwin D."/>
            <person name="Ballew R.M."/>
            <person name="Basu A."/>
            <person name="Baxendale J."/>
            <person name="Bayraktaroglu L."/>
            <person name="Beasley E.M."/>
            <person name="Beeson K.Y."/>
            <person name="Benos P.V."/>
            <person name="Berman B.P."/>
            <person name="Bhandari D."/>
            <person name="Bolshakov S."/>
            <person name="Borkova D."/>
            <person name="Botchan M.R."/>
            <person name="Bouck J."/>
            <person name="Brokstein P."/>
            <person name="Brottier P."/>
            <person name="Burtis K.C."/>
            <person name="Busam D.A."/>
            <person name="Butler H."/>
            <person name="Cadieu E."/>
            <person name="Center A."/>
            <person name="Chandra I."/>
            <person name="Cherry J.M."/>
            <person name="Cawley S."/>
            <person name="Dahlke C."/>
            <person name="Davenport L.B."/>
            <person name="Davies P."/>
            <person name="de Pablos B."/>
            <person name="Delcher A."/>
            <person name="Deng Z."/>
            <person name="Mays A.D."/>
            <person name="Dew I."/>
            <person name="Dietz S.M."/>
            <person name="Dodson K."/>
            <person name="Doup L.E."/>
            <person name="Downes M."/>
            <person name="Dugan-Rocha S."/>
            <person name="Dunkov B.C."/>
            <person name="Dunn P."/>
            <person name="Durbin K.J."/>
            <person name="Evangelista C.C."/>
            <person name="Ferraz C."/>
            <person name="Ferriera S."/>
            <person name="Fleischmann W."/>
            <person name="Fosler C."/>
            <person name="Gabrielian A.E."/>
            <person name="Garg N.S."/>
            <person name="Gelbart W.M."/>
            <person name="Glasser K."/>
            <person name="Glodek A."/>
            <person name="Gong F."/>
            <person name="Gorrell J.H."/>
            <person name="Gu Z."/>
            <person name="Guan P."/>
            <person name="Harris M."/>
            <person name="Harris N.L."/>
            <person name="Harvey D.A."/>
            <person name="Heiman T.J."/>
            <person name="Hernandez J.R."/>
            <person name="Houck J."/>
            <person name="Hostin D."/>
            <person name="Houston K.A."/>
            <person name="Howland T.J."/>
            <person name="Wei M.-H."/>
            <person name="Ibegwam C."/>
            <person name="Jalali M."/>
            <person name="Kalush F."/>
            <person name="Karpen G.H."/>
            <person name="Ke Z."/>
            <person name="Kennison J.A."/>
            <person name="Ketchum K.A."/>
            <person name="Kimmel B.E."/>
            <person name="Kodira C.D."/>
            <person name="Kraft C.L."/>
            <person name="Kravitz S."/>
            <person name="Kulp D."/>
            <person name="Lai Z."/>
            <person name="Lasko P."/>
            <person name="Lei Y."/>
            <person name="Levitsky A.A."/>
            <person name="Li J.H."/>
            <person name="Li Z."/>
            <person name="Liang Y."/>
            <person name="Lin X."/>
            <person name="Liu X."/>
            <person name="Mattei B."/>
            <person name="McIntosh T.C."/>
            <person name="McLeod M.P."/>
            <person name="McPherson D."/>
            <person name="Merkulov G."/>
            <person name="Milshina N.V."/>
            <person name="Mobarry C."/>
            <person name="Morris J."/>
            <person name="Moshrefi A."/>
            <person name="Mount S.M."/>
            <person name="Moy M."/>
            <person name="Murphy B."/>
            <person name="Murphy L."/>
            <person name="Muzny D.M."/>
            <person name="Nelson D.L."/>
            <person name="Nelson D.R."/>
            <person name="Nelson K.A."/>
            <person name="Nixon K."/>
            <person name="Nusskern D.R."/>
            <person name="Pacleb J.M."/>
            <person name="Palazzolo M."/>
            <person name="Pittman G.S."/>
            <person name="Pan S."/>
            <person name="Pollard J."/>
            <person name="Puri V."/>
            <person name="Reese M.G."/>
            <person name="Reinert K."/>
            <person name="Remington K."/>
            <person name="Saunders R.D.C."/>
            <person name="Scheeler F."/>
            <person name="Shen H."/>
            <person name="Shue B.C."/>
            <person name="Siden-Kiamos I."/>
            <person name="Simpson M."/>
            <person name="Skupski M.P."/>
            <person name="Smith T.J."/>
            <person name="Spier E."/>
            <person name="Spradling A.C."/>
            <person name="Stapleton M."/>
            <person name="Strong R."/>
            <person name="Sun E."/>
            <person name="Svirskas R."/>
            <person name="Tector C."/>
            <person name="Turner R."/>
            <person name="Venter E."/>
            <person name="Wang A.H."/>
            <person name="Wang X."/>
            <person name="Wang Z.-Y."/>
            <person name="Wassarman D.A."/>
            <person name="Weinstock G.M."/>
            <person name="Weissenbach J."/>
            <person name="Williams S.M."/>
            <person name="Woodage T."/>
            <person name="Worley K.C."/>
            <person name="Wu D."/>
            <person name="Yang S."/>
            <person name="Yao Q.A."/>
            <person name="Ye J."/>
            <person name="Yeh R.-F."/>
            <person name="Zaveri J.S."/>
            <person name="Zhan M."/>
            <person name="Zhang G."/>
            <person name="Zhao Q."/>
            <person name="Zheng L."/>
            <person name="Zheng X.H."/>
            <person name="Zhong F.N."/>
            <person name="Zhong W."/>
            <person name="Zhou X."/>
            <person name="Zhu S.C."/>
            <person name="Zhu X."/>
            <person name="Smith H.O."/>
            <person name="Gibbs R.A."/>
            <person name="Myers E.W."/>
            <person name="Rubin G.M."/>
            <person name="Venter J.C."/>
        </authorList>
    </citation>
    <scope>NUCLEOTIDE SEQUENCE [LARGE SCALE GENOMIC DNA]</scope>
    <source>
        <strain>Berkeley</strain>
    </source>
</reference>
<reference key="5">
    <citation type="journal article" date="2002" name="Genome Biol.">
        <title>Annotation of the Drosophila melanogaster euchromatic genome: a systematic review.</title>
        <authorList>
            <person name="Misra S."/>
            <person name="Crosby M.A."/>
            <person name="Mungall C.J."/>
            <person name="Matthews B.B."/>
            <person name="Campbell K.S."/>
            <person name="Hradecky P."/>
            <person name="Huang Y."/>
            <person name="Kaminker J.S."/>
            <person name="Millburn G.H."/>
            <person name="Prochnik S.E."/>
            <person name="Smith C.D."/>
            <person name="Tupy J.L."/>
            <person name="Whitfield E.J."/>
            <person name="Bayraktaroglu L."/>
            <person name="Berman B.P."/>
            <person name="Bettencourt B.R."/>
            <person name="Celniker S.E."/>
            <person name="de Grey A.D.N.J."/>
            <person name="Drysdale R.A."/>
            <person name="Harris N.L."/>
            <person name="Richter J."/>
            <person name="Russo S."/>
            <person name="Schroeder A.J."/>
            <person name="Shu S.Q."/>
            <person name="Stapleton M."/>
            <person name="Yamada C."/>
            <person name="Ashburner M."/>
            <person name="Gelbart W.M."/>
            <person name="Rubin G.M."/>
            <person name="Lewis S.E."/>
        </authorList>
    </citation>
    <scope>GENOME REANNOTATION</scope>
    <source>
        <strain>Berkeley</strain>
    </source>
</reference>
<reference key="6">
    <citation type="submission" date="2005-03" db="EMBL/GenBank/DDBJ databases">
        <authorList>
            <person name="Stapleton M."/>
            <person name="Brokstein P."/>
            <person name="Hong L."/>
            <person name="Agbayani A."/>
            <person name="Carlson J.W."/>
            <person name="Champe M."/>
            <person name="Chavez C."/>
            <person name="Dorsett V."/>
            <person name="Dresnek D."/>
            <person name="Farfan D."/>
            <person name="Frise E."/>
            <person name="George R.A."/>
            <person name="Gonzalez M."/>
            <person name="Guarin H."/>
            <person name="Kronmiller B."/>
            <person name="Li P.W."/>
            <person name="Liao G."/>
            <person name="Miranda A."/>
            <person name="Mungall C.J."/>
            <person name="Nunoo J."/>
            <person name="Pacleb J.M."/>
            <person name="Paragas V."/>
            <person name="Park S."/>
            <person name="Patel S."/>
            <person name="Phouanenavong S."/>
            <person name="Wan K.H."/>
            <person name="Yu C."/>
            <person name="Lewis S.E."/>
            <person name="Rubin G.M."/>
            <person name="Celniker S.E."/>
        </authorList>
    </citation>
    <scope>NUCLEOTIDE SEQUENCE [LARGE SCALE MRNA] (ISOFORMS A; B AND H)</scope>
    <source>
        <strain>Berkeley</strain>
        <tissue>Embryo</tissue>
        <tissue>Testis</tissue>
    </source>
</reference>
<reference key="7">
    <citation type="journal article" date="2002" name="Genome Biol.">
        <title>A Drosophila full-length cDNA resource.</title>
        <authorList>
            <person name="Stapleton M."/>
            <person name="Carlson J.W."/>
            <person name="Brokstein P."/>
            <person name="Yu C."/>
            <person name="Champe M."/>
            <person name="George R.A."/>
            <person name="Guarin H."/>
            <person name="Kronmiller B."/>
            <person name="Pacleb J.M."/>
            <person name="Park S."/>
            <person name="Wan K.H."/>
            <person name="Rubin G.M."/>
            <person name="Celniker S.E."/>
        </authorList>
    </citation>
    <scope>NUCLEOTIDE SEQUENCE [LARGE SCALE MRNA] (ISOFORM G)</scope>
    <source>
        <strain>Berkeley</strain>
        <tissue>Testis</tissue>
    </source>
</reference>
<reference key="8">
    <citation type="journal article" date="1996" name="Cell">
        <title>The homeotic target gene centrosomin encodes an essential centrosomal component.</title>
        <authorList>
            <person name="Li K."/>
            <person name="Kaufman T.C."/>
        </authorList>
    </citation>
    <scope>FUNCTION</scope>
    <scope>SUBCELLULAR LOCATION</scope>
    <scope>DEVELOPMENTAL STAGE</scope>
</reference>
<reference key="9">
    <citation type="journal article" date="2008" name="J. Proteome Res.">
        <title>Phosphoproteome analysis of Drosophila melanogaster embryos.</title>
        <authorList>
            <person name="Zhai B."/>
            <person name="Villen J."/>
            <person name="Beausoleil S.A."/>
            <person name="Mintseris J."/>
            <person name="Gygi S.P."/>
        </authorList>
    </citation>
    <scope>PHOSPHORYLATION [LARGE SCALE ANALYSIS] AT SER-545; THR-782; SER-785; SER-874; SER-876; SER-878; SER-1191; SER-1234; SER-1237 AND SER-1239</scope>
    <scope>IDENTIFICATION BY MASS SPECTROMETRY</scope>
    <source>
        <tissue>Embryo</tissue>
    </source>
</reference>
<reference key="10">
    <citation type="journal article" date="2020" name="Nat. Cell Biol.">
        <title>A perinuclear microtubule-organizing centre controls nuclear positioning and basement membrane secretion.</title>
        <authorList>
            <person name="Zheng Y."/>
            <person name="Buchwalter R.A."/>
            <person name="Zheng C."/>
            <person name="Wight E.M."/>
            <person name="Chen J.V."/>
            <person name="Megraw T.L."/>
        </authorList>
    </citation>
    <scope>SUBCELLULAR LOCATION</scope>
    <scope>DISRUPTION PHENOTYPE</scope>
</reference>
<keyword id="KW-0002">3D-structure</keyword>
<keyword id="KW-0025">Alternative splicing</keyword>
<keyword id="KW-0131">Cell cycle</keyword>
<keyword id="KW-0132">Cell division</keyword>
<keyword id="KW-0966">Cell projection</keyword>
<keyword id="KW-0969">Cilium</keyword>
<keyword id="KW-0175">Coiled coil</keyword>
<keyword id="KW-0963">Cytoplasm</keyword>
<keyword id="KW-0206">Cytoskeleton</keyword>
<keyword id="KW-0217">Developmental protein</keyword>
<keyword id="KW-0282">Flagellum</keyword>
<keyword id="KW-0469">Meiosis</keyword>
<keyword id="KW-0498">Mitosis</keyword>
<keyword id="KW-0597">Phosphoprotein</keyword>
<keyword id="KW-1185">Reference proteome</keyword>
<dbReference type="EMBL" id="U35621">
    <property type="protein sequence ID" value="AAB82065.1"/>
    <property type="molecule type" value="mRNA"/>
</dbReference>
<dbReference type="EMBL" id="AE013599">
    <property type="protein sequence ID" value="AAF58375.1"/>
    <property type="molecule type" value="Genomic_DNA"/>
</dbReference>
<dbReference type="EMBL" id="AE013599">
    <property type="protein sequence ID" value="AAF58376.2"/>
    <property type="molecule type" value="Genomic_DNA"/>
</dbReference>
<dbReference type="EMBL" id="AE013599">
    <property type="protein sequence ID" value="AAM68579.1"/>
    <property type="molecule type" value="Genomic_DNA"/>
</dbReference>
<dbReference type="EMBL" id="AE013599">
    <property type="protein sequence ID" value="ACZ94414.1"/>
    <property type="molecule type" value="Genomic_DNA"/>
</dbReference>
<dbReference type="EMBL" id="AE013599">
    <property type="protein sequence ID" value="AFH08050.1"/>
    <property type="molecule type" value="Genomic_DNA"/>
</dbReference>
<dbReference type="EMBL" id="BT010053">
    <property type="protein sequence ID" value="AAQ22522.1"/>
    <property type="molecule type" value="mRNA"/>
</dbReference>
<dbReference type="EMBL" id="BT003808">
    <property type="protein sequence ID" value="AAO41491.1"/>
    <property type="molecule type" value="mRNA"/>
</dbReference>
<dbReference type="EMBL" id="BT021269">
    <property type="protein sequence ID" value="AAX33417.1"/>
    <property type="molecule type" value="mRNA"/>
</dbReference>
<dbReference type="EMBL" id="BT001287">
    <property type="protein sequence ID" value="AAN71043.1"/>
    <property type="molecule type" value="mRNA"/>
</dbReference>
<dbReference type="PIR" id="T13347">
    <property type="entry name" value="T13347"/>
</dbReference>
<dbReference type="RefSeq" id="NP_001163141.1">
    <molecule id="P54623-4"/>
    <property type="nucleotide sequence ID" value="NM_001169670.2"/>
</dbReference>
<dbReference type="RefSeq" id="NP_001246294.1">
    <molecule id="P54623-3"/>
    <property type="nucleotide sequence ID" value="NM_001259365.2"/>
</dbReference>
<dbReference type="RefSeq" id="NP_001246295.1">
    <molecule id="P54623-3"/>
    <property type="nucleotide sequence ID" value="NM_001259366.2"/>
</dbReference>
<dbReference type="RefSeq" id="NP_001246296.1">
    <molecule id="P54623-5"/>
    <property type="nucleotide sequence ID" value="NM_001259367.1"/>
</dbReference>
<dbReference type="RefSeq" id="NP_477084.1">
    <molecule id="P54623-2"/>
    <property type="nucleotide sequence ID" value="NM_057736.6"/>
</dbReference>
<dbReference type="RefSeq" id="NP_725297.1">
    <molecule id="P54623-3"/>
    <property type="nucleotide sequence ID" value="NM_165990.3"/>
</dbReference>
<dbReference type="RefSeq" id="NP_725298.1">
    <molecule id="P54623-1"/>
    <property type="nucleotide sequence ID" value="NM_165991.4"/>
</dbReference>
<dbReference type="PDB" id="5I7C">
    <property type="method" value="X-ray"/>
    <property type="resolution" value="2.80 A"/>
    <property type="chains" value="A/B/C/D=1254-1320"/>
</dbReference>
<dbReference type="PDB" id="5MVW">
    <property type="method" value="X-ray"/>
    <property type="resolution" value="1.82 A"/>
    <property type="chains" value="A/B=1254-1320, C/D=662-716"/>
</dbReference>
<dbReference type="PDB" id="5MW0">
    <property type="method" value="X-ray"/>
    <property type="resolution" value="2.00 A"/>
    <property type="chains" value="A/B=1254-1320, C/D=662-716"/>
</dbReference>
<dbReference type="PDB" id="5MW9">
    <property type="method" value="X-ray"/>
    <property type="resolution" value="2.20 A"/>
    <property type="chains" value="A/B/E/F=1254-1320, C/D/G/H=662-716"/>
</dbReference>
<dbReference type="PDB" id="5MWE">
    <property type="method" value="X-ray"/>
    <property type="resolution" value="2.02 A"/>
    <property type="chains" value="A/B=1254-1320, C/D=662-739"/>
</dbReference>
<dbReference type="PDBsum" id="5I7C"/>
<dbReference type="PDBsum" id="5MVW"/>
<dbReference type="PDBsum" id="5MW0"/>
<dbReference type="PDBsum" id="5MW9"/>
<dbReference type="PDBsum" id="5MWE"/>
<dbReference type="SMR" id="P54623"/>
<dbReference type="BioGRID" id="62251">
    <property type="interactions" value="106"/>
</dbReference>
<dbReference type="DIP" id="DIP-60708N"/>
<dbReference type="FunCoup" id="P54623">
    <property type="interactions" value="118"/>
</dbReference>
<dbReference type="IntAct" id="P54623">
    <property type="interactions" value="20"/>
</dbReference>
<dbReference type="MINT" id="P54623"/>
<dbReference type="STRING" id="7227.FBpp0301625"/>
<dbReference type="iPTMnet" id="P54623"/>
<dbReference type="PaxDb" id="7227-FBpp0301625"/>
<dbReference type="DNASU" id="36491"/>
<dbReference type="EnsemblMetazoa" id="FBtr0087703">
    <molecule id="P54623-2"/>
    <property type="protein sequence ID" value="FBpp0086822"/>
    <property type="gene ID" value="FBgn0013765"/>
</dbReference>
<dbReference type="EnsemblMetazoa" id="FBtr0087704">
    <molecule id="P54623-3"/>
    <property type="protein sequence ID" value="FBpp0086823"/>
    <property type="gene ID" value="FBgn0013765"/>
</dbReference>
<dbReference type="EnsemblMetazoa" id="FBtr0301395">
    <molecule id="P54623-4"/>
    <property type="protein sequence ID" value="FBpp0290609"/>
    <property type="gene ID" value="FBgn0013765"/>
</dbReference>
<dbReference type="EnsemblMetazoa" id="FBtr0306635">
    <molecule id="P54623-5"/>
    <property type="protein sequence ID" value="FBpp0297590"/>
    <property type="gene ID" value="FBgn0013765"/>
</dbReference>
<dbReference type="EnsemblMetazoa" id="FBtr0309889">
    <molecule id="P54623-1"/>
    <property type="protein sequence ID" value="FBpp0301623"/>
    <property type="gene ID" value="FBgn0013765"/>
</dbReference>
<dbReference type="EnsemblMetazoa" id="FBtr0309892">
    <molecule id="P54623-3"/>
    <property type="protein sequence ID" value="FBpp0301626"/>
    <property type="gene ID" value="FBgn0013765"/>
</dbReference>
<dbReference type="EnsemblMetazoa" id="FBtr0309893">
    <molecule id="P54623-3"/>
    <property type="protein sequence ID" value="FBpp0301627"/>
    <property type="gene ID" value="FBgn0013765"/>
</dbReference>
<dbReference type="GeneID" id="36491"/>
<dbReference type="KEGG" id="dme:Dmel_CG4832"/>
<dbReference type="AGR" id="FB:FBgn0013765"/>
<dbReference type="CTD" id="36491"/>
<dbReference type="FlyBase" id="FBgn0013765">
    <property type="gene designation" value="cnn"/>
</dbReference>
<dbReference type="VEuPathDB" id="VectorBase:FBgn0013765"/>
<dbReference type="eggNOG" id="ENOG502QTI7">
    <property type="taxonomic scope" value="Eukaryota"/>
</dbReference>
<dbReference type="InParanoid" id="P54623"/>
<dbReference type="OrthoDB" id="10255000at2759"/>
<dbReference type="PhylomeDB" id="P54623"/>
<dbReference type="SignaLink" id="P54623"/>
<dbReference type="BioGRID-ORCS" id="36491">
    <property type="hits" value="0 hits in 3 CRISPR screens"/>
</dbReference>
<dbReference type="CD-CODE" id="2838EF58">
    <property type="entry name" value="Centrosome"/>
</dbReference>
<dbReference type="ChiTaRS" id="arr">
    <property type="organism name" value="fly"/>
</dbReference>
<dbReference type="GenomeRNAi" id="36491"/>
<dbReference type="PRO" id="PR:P54623"/>
<dbReference type="Proteomes" id="UP000000803">
    <property type="component" value="Chromosome 2R"/>
</dbReference>
<dbReference type="Bgee" id="FBgn0013765">
    <property type="expression patterns" value="Expressed in hemocyte (sensu Nematoda and Protostomia) in arthropod fat body and 250 other cell types or tissues"/>
</dbReference>
<dbReference type="ExpressionAtlas" id="P54623">
    <property type="expression patterns" value="baseline and differential"/>
</dbReference>
<dbReference type="GO" id="GO:0005814">
    <property type="term" value="C:centriole"/>
    <property type="evidence" value="ECO:0000314"/>
    <property type="project" value="FlyBase"/>
</dbReference>
<dbReference type="GO" id="GO:0005813">
    <property type="term" value="C:centrosome"/>
    <property type="evidence" value="ECO:0000314"/>
    <property type="project" value="FlyBase"/>
</dbReference>
<dbReference type="GO" id="GO:0036064">
    <property type="term" value="C:ciliary basal body"/>
    <property type="evidence" value="ECO:0000314"/>
    <property type="project" value="FlyBase"/>
</dbReference>
<dbReference type="GO" id="GO:0005794">
    <property type="term" value="C:Golgi apparatus"/>
    <property type="evidence" value="ECO:0000318"/>
    <property type="project" value="GO_Central"/>
</dbReference>
<dbReference type="GO" id="GO:0031514">
    <property type="term" value="C:motile cilium"/>
    <property type="evidence" value="ECO:0007669"/>
    <property type="project" value="UniProtKB-KW"/>
</dbReference>
<dbReference type="GO" id="GO:0000242">
    <property type="term" value="C:pericentriolar material"/>
    <property type="evidence" value="ECO:0000314"/>
    <property type="project" value="FlyBase"/>
</dbReference>
<dbReference type="GO" id="GO:0048471">
    <property type="term" value="C:perinuclear region of cytoplasm"/>
    <property type="evidence" value="ECO:0007669"/>
    <property type="project" value="UniProtKB-SubCell"/>
</dbReference>
<dbReference type="GO" id="GO:0000922">
    <property type="term" value="C:spindle pole"/>
    <property type="evidence" value="ECO:0000314"/>
    <property type="project" value="FlyBase"/>
</dbReference>
<dbReference type="GO" id="GO:0060090">
    <property type="term" value="F:molecular adaptor activity"/>
    <property type="evidence" value="ECO:0000318"/>
    <property type="project" value="GO_Central"/>
</dbReference>
<dbReference type="GO" id="GO:0008356">
    <property type="term" value="P:asymmetric cell division"/>
    <property type="evidence" value="ECO:0000314"/>
    <property type="project" value="FlyBase"/>
</dbReference>
<dbReference type="GO" id="GO:0055059">
    <property type="term" value="P:asymmetric neuroblast division"/>
    <property type="evidence" value="ECO:0000315"/>
    <property type="project" value="FlyBase"/>
</dbReference>
<dbReference type="GO" id="GO:0007417">
    <property type="term" value="P:central nervous system development"/>
    <property type="evidence" value="ECO:0000315"/>
    <property type="project" value="FlyBase"/>
</dbReference>
<dbReference type="GO" id="GO:0007099">
    <property type="term" value="P:centriole replication"/>
    <property type="evidence" value="ECO:0000314"/>
    <property type="project" value="FlyBase"/>
</dbReference>
<dbReference type="GO" id="GO:0007098">
    <property type="term" value="P:centrosome cycle"/>
    <property type="evidence" value="ECO:0000315"/>
    <property type="project" value="FlyBase"/>
</dbReference>
<dbReference type="GO" id="GO:0040016">
    <property type="term" value="P:embryonic cleavage"/>
    <property type="evidence" value="ECO:0000315"/>
    <property type="project" value="FlyBase"/>
</dbReference>
<dbReference type="GO" id="GO:0051321">
    <property type="term" value="P:meiotic cell cycle"/>
    <property type="evidence" value="ECO:0007669"/>
    <property type="project" value="UniProtKB-KW"/>
</dbReference>
<dbReference type="GO" id="GO:0007494">
    <property type="term" value="P:midgut development"/>
    <property type="evidence" value="ECO:0000315"/>
    <property type="project" value="FlyBase"/>
</dbReference>
<dbReference type="GO" id="GO:0007052">
    <property type="term" value="P:mitotic spindle organization"/>
    <property type="evidence" value="ECO:0000315"/>
    <property type="project" value="FlyBase"/>
</dbReference>
<dbReference type="GO" id="GO:0007422">
    <property type="term" value="P:peripheral nervous system development"/>
    <property type="evidence" value="ECO:0000315"/>
    <property type="project" value="FlyBase"/>
</dbReference>
<dbReference type="GO" id="GO:0008594">
    <property type="term" value="P:photoreceptor cell morphogenesis"/>
    <property type="evidence" value="ECO:0000315"/>
    <property type="project" value="FlyBase"/>
</dbReference>
<dbReference type="GO" id="GO:0007279">
    <property type="term" value="P:pole cell formation"/>
    <property type="evidence" value="ECO:0000315"/>
    <property type="project" value="FlyBase"/>
</dbReference>
<dbReference type="GO" id="GO:0030997">
    <property type="term" value="P:regulation of centriole-centriole cohesion"/>
    <property type="evidence" value="ECO:0000315"/>
    <property type="project" value="FlyBase"/>
</dbReference>
<dbReference type="GO" id="GO:1903358">
    <property type="term" value="P:regulation of Golgi organization"/>
    <property type="evidence" value="ECO:0000318"/>
    <property type="project" value="GO_Central"/>
</dbReference>
<dbReference type="InterPro" id="IPR012943">
    <property type="entry name" value="Cnn_1N"/>
</dbReference>
<dbReference type="InterPro" id="IPR052593">
    <property type="entry name" value="MT-associated_AKAP9-binding"/>
</dbReference>
<dbReference type="PANTHER" id="PTHR46501:SF10">
    <property type="entry name" value="CENTROSOMIN"/>
    <property type="match status" value="1"/>
</dbReference>
<dbReference type="PANTHER" id="PTHR46501">
    <property type="entry name" value="MYOMEGALIN"/>
    <property type="match status" value="1"/>
</dbReference>
<dbReference type="Pfam" id="PF07989">
    <property type="entry name" value="Cnn_1N"/>
    <property type="match status" value="1"/>
</dbReference>
<gene>
    <name type="primary">cnn</name>
    <name type="synonym">Arr</name>
    <name type="ORF">CG4832</name>
</gene>